<feature type="chain" id="PRO_0000225413" description="Dihydroxy-acid dehydratase">
    <location>
        <begin position="1"/>
        <end position="615"/>
    </location>
</feature>
<feature type="active site" description="Proton acceptor" evidence="1">
    <location>
        <position position="515"/>
    </location>
</feature>
<feature type="binding site" evidence="1">
    <location>
        <position position="81"/>
    </location>
    <ligand>
        <name>Mg(2+)</name>
        <dbReference type="ChEBI" id="CHEBI:18420"/>
    </ligand>
</feature>
<feature type="binding site" evidence="1">
    <location>
        <position position="122"/>
    </location>
    <ligand>
        <name>[2Fe-2S] cluster</name>
        <dbReference type="ChEBI" id="CHEBI:190135"/>
    </ligand>
</feature>
<feature type="binding site" evidence="1">
    <location>
        <position position="123"/>
    </location>
    <ligand>
        <name>Mg(2+)</name>
        <dbReference type="ChEBI" id="CHEBI:18420"/>
    </ligand>
</feature>
<feature type="binding site" description="via carbamate group" evidence="1">
    <location>
        <position position="124"/>
    </location>
    <ligand>
        <name>Mg(2+)</name>
        <dbReference type="ChEBI" id="CHEBI:18420"/>
    </ligand>
</feature>
<feature type="binding site" evidence="1">
    <location>
        <position position="193"/>
    </location>
    <ligand>
        <name>[2Fe-2S] cluster</name>
        <dbReference type="ChEBI" id="CHEBI:190135"/>
    </ligand>
</feature>
<feature type="binding site" evidence="1">
    <location>
        <position position="489"/>
    </location>
    <ligand>
        <name>Mg(2+)</name>
        <dbReference type="ChEBI" id="CHEBI:18420"/>
    </ligand>
</feature>
<feature type="modified residue" description="N6-carboxylysine" evidence="1">
    <location>
        <position position="124"/>
    </location>
</feature>
<protein>
    <recommendedName>
        <fullName evidence="1">Dihydroxy-acid dehydratase</fullName>
        <shortName evidence="1">DAD</shortName>
        <ecNumber evidence="1">4.2.1.9</ecNumber>
    </recommendedName>
</protein>
<gene>
    <name evidence="1" type="primary">ilvD</name>
    <name type="ordered locus">Psyr_0469</name>
</gene>
<accession>Q4ZZ83</accession>
<dbReference type="EC" id="4.2.1.9" evidence="1"/>
<dbReference type="EMBL" id="CP000075">
    <property type="protein sequence ID" value="AAY35539.1"/>
    <property type="molecule type" value="Genomic_DNA"/>
</dbReference>
<dbReference type="RefSeq" id="WP_011266422.1">
    <property type="nucleotide sequence ID" value="NC_007005.1"/>
</dbReference>
<dbReference type="RefSeq" id="YP_233577.1">
    <property type="nucleotide sequence ID" value="NC_007005.1"/>
</dbReference>
<dbReference type="SMR" id="Q4ZZ83"/>
<dbReference type="STRING" id="205918.Psyr_0469"/>
<dbReference type="KEGG" id="psb:Psyr_0469"/>
<dbReference type="PATRIC" id="fig|205918.7.peg.488"/>
<dbReference type="eggNOG" id="COG0129">
    <property type="taxonomic scope" value="Bacteria"/>
</dbReference>
<dbReference type="HOGENOM" id="CLU_014271_4_2_6"/>
<dbReference type="OrthoDB" id="9807077at2"/>
<dbReference type="UniPathway" id="UPA00047">
    <property type="reaction ID" value="UER00057"/>
</dbReference>
<dbReference type="UniPathway" id="UPA00049">
    <property type="reaction ID" value="UER00061"/>
</dbReference>
<dbReference type="Proteomes" id="UP000000426">
    <property type="component" value="Chromosome"/>
</dbReference>
<dbReference type="GO" id="GO:0005829">
    <property type="term" value="C:cytosol"/>
    <property type="evidence" value="ECO:0007669"/>
    <property type="project" value="TreeGrafter"/>
</dbReference>
<dbReference type="GO" id="GO:0051537">
    <property type="term" value="F:2 iron, 2 sulfur cluster binding"/>
    <property type="evidence" value="ECO:0007669"/>
    <property type="project" value="UniProtKB-UniRule"/>
</dbReference>
<dbReference type="GO" id="GO:0004160">
    <property type="term" value="F:dihydroxy-acid dehydratase activity"/>
    <property type="evidence" value="ECO:0007669"/>
    <property type="project" value="UniProtKB-UniRule"/>
</dbReference>
<dbReference type="GO" id="GO:0000287">
    <property type="term" value="F:magnesium ion binding"/>
    <property type="evidence" value="ECO:0007669"/>
    <property type="project" value="UniProtKB-UniRule"/>
</dbReference>
<dbReference type="GO" id="GO:0009097">
    <property type="term" value="P:isoleucine biosynthetic process"/>
    <property type="evidence" value="ECO:0007669"/>
    <property type="project" value="UniProtKB-UniRule"/>
</dbReference>
<dbReference type="GO" id="GO:0009099">
    <property type="term" value="P:L-valine biosynthetic process"/>
    <property type="evidence" value="ECO:0007669"/>
    <property type="project" value="UniProtKB-UniRule"/>
</dbReference>
<dbReference type="FunFam" id="3.50.30.80:FF:000001">
    <property type="entry name" value="Dihydroxy-acid dehydratase"/>
    <property type="match status" value="1"/>
</dbReference>
<dbReference type="Gene3D" id="3.50.30.80">
    <property type="entry name" value="IlvD/EDD C-terminal domain-like"/>
    <property type="match status" value="1"/>
</dbReference>
<dbReference type="HAMAP" id="MF_00012">
    <property type="entry name" value="IlvD"/>
    <property type="match status" value="1"/>
</dbReference>
<dbReference type="InterPro" id="IPR042096">
    <property type="entry name" value="Dihydro-acid_dehy_C"/>
</dbReference>
<dbReference type="InterPro" id="IPR004404">
    <property type="entry name" value="DihydroxyA_deHydtase"/>
</dbReference>
<dbReference type="InterPro" id="IPR020558">
    <property type="entry name" value="DiOHA_6PGluconate_deHydtase_CS"/>
</dbReference>
<dbReference type="InterPro" id="IPR056740">
    <property type="entry name" value="ILV_EDD_C"/>
</dbReference>
<dbReference type="InterPro" id="IPR000581">
    <property type="entry name" value="ILV_EDD_N"/>
</dbReference>
<dbReference type="InterPro" id="IPR037237">
    <property type="entry name" value="IlvD/EDD_N"/>
</dbReference>
<dbReference type="NCBIfam" id="TIGR00110">
    <property type="entry name" value="ilvD"/>
    <property type="match status" value="1"/>
</dbReference>
<dbReference type="NCBIfam" id="NF009103">
    <property type="entry name" value="PRK12448.1"/>
    <property type="match status" value="1"/>
</dbReference>
<dbReference type="PANTHER" id="PTHR43661">
    <property type="entry name" value="D-XYLONATE DEHYDRATASE"/>
    <property type="match status" value="1"/>
</dbReference>
<dbReference type="PANTHER" id="PTHR43661:SF3">
    <property type="entry name" value="D-XYLONATE DEHYDRATASE YAGF-RELATED"/>
    <property type="match status" value="1"/>
</dbReference>
<dbReference type="Pfam" id="PF24877">
    <property type="entry name" value="ILV_EDD_C"/>
    <property type="match status" value="1"/>
</dbReference>
<dbReference type="Pfam" id="PF00920">
    <property type="entry name" value="ILVD_EDD_N"/>
    <property type="match status" value="1"/>
</dbReference>
<dbReference type="SUPFAM" id="SSF143975">
    <property type="entry name" value="IlvD/EDD N-terminal domain-like"/>
    <property type="match status" value="1"/>
</dbReference>
<dbReference type="SUPFAM" id="SSF52016">
    <property type="entry name" value="LeuD/IlvD-like"/>
    <property type="match status" value="1"/>
</dbReference>
<dbReference type="PROSITE" id="PS00886">
    <property type="entry name" value="ILVD_EDD_1"/>
    <property type="match status" value="1"/>
</dbReference>
<dbReference type="PROSITE" id="PS00887">
    <property type="entry name" value="ILVD_EDD_2"/>
    <property type="match status" value="1"/>
</dbReference>
<comment type="function">
    <text evidence="1">Functions in the biosynthesis of branched-chain amino acids. Catalyzes the dehydration of (2R,3R)-2,3-dihydroxy-3-methylpentanoate (2,3-dihydroxy-3-methylvalerate) into 2-oxo-3-methylpentanoate (2-oxo-3-methylvalerate) and of (2R)-2,3-dihydroxy-3-methylbutanoate (2,3-dihydroxyisovalerate) into 2-oxo-3-methylbutanoate (2-oxoisovalerate), the penultimate precursor to L-isoleucine and L-valine, respectively.</text>
</comment>
<comment type="catalytic activity">
    <reaction evidence="1">
        <text>(2R)-2,3-dihydroxy-3-methylbutanoate = 3-methyl-2-oxobutanoate + H2O</text>
        <dbReference type="Rhea" id="RHEA:24809"/>
        <dbReference type="ChEBI" id="CHEBI:11851"/>
        <dbReference type="ChEBI" id="CHEBI:15377"/>
        <dbReference type="ChEBI" id="CHEBI:49072"/>
        <dbReference type="EC" id="4.2.1.9"/>
    </reaction>
    <physiologicalReaction direction="left-to-right" evidence="1">
        <dbReference type="Rhea" id="RHEA:24810"/>
    </physiologicalReaction>
</comment>
<comment type="catalytic activity">
    <reaction evidence="1">
        <text>(2R,3R)-2,3-dihydroxy-3-methylpentanoate = (S)-3-methyl-2-oxopentanoate + H2O</text>
        <dbReference type="Rhea" id="RHEA:27694"/>
        <dbReference type="ChEBI" id="CHEBI:15377"/>
        <dbReference type="ChEBI" id="CHEBI:35146"/>
        <dbReference type="ChEBI" id="CHEBI:49258"/>
        <dbReference type="EC" id="4.2.1.9"/>
    </reaction>
    <physiologicalReaction direction="left-to-right" evidence="1">
        <dbReference type="Rhea" id="RHEA:27695"/>
    </physiologicalReaction>
</comment>
<comment type="cofactor">
    <cofactor evidence="1">
        <name>[2Fe-2S] cluster</name>
        <dbReference type="ChEBI" id="CHEBI:190135"/>
    </cofactor>
    <text evidence="1">Binds 1 [2Fe-2S] cluster per subunit. This cluster acts as a Lewis acid cofactor.</text>
</comment>
<comment type="cofactor">
    <cofactor evidence="1">
        <name>Mg(2+)</name>
        <dbReference type="ChEBI" id="CHEBI:18420"/>
    </cofactor>
</comment>
<comment type="pathway">
    <text evidence="1">Amino-acid biosynthesis; L-isoleucine biosynthesis; L-isoleucine from 2-oxobutanoate: step 3/4.</text>
</comment>
<comment type="pathway">
    <text evidence="1">Amino-acid biosynthesis; L-valine biosynthesis; L-valine from pyruvate: step 3/4.</text>
</comment>
<comment type="subunit">
    <text evidence="1">Homodimer.</text>
</comment>
<comment type="similarity">
    <text evidence="1">Belongs to the IlvD/Edd family.</text>
</comment>
<evidence type="ECO:0000255" key="1">
    <source>
        <dbReference type="HAMAP-Rule" id="MF_00012"/>
    </source>
</evidence>
<reference key="1">
    <citation type="journal article" date="2005" name="Proc. Natl. Acad. Sci. U.S.A.">
        <title>Comparison of the complete genome sequences of Pseudomonas syringae pv. syringae B728a and pv. tomato DC3000.</title>
        <authorList>
            <person name="Feil H."/>
            <person name="Feil W.S."/>
            <person name="Chain P."/>
            <person name="Larimer F."/>
            <person name="Dibartolo G."/>
            <person name="Copeland A."/>
            <person name="Lykidis A."/>
            <person name="Trong S."/>
            <person name="Nolan M."/>
            <person name="Goltsman E."/>
            <person name="Thiel J."/>
            <person name="Malfatti S."/>
            <person name="Loper J.E."/>
            <person name="Lapidus A."/>
            <person name="Detter J.C."/>
            <person name="Land M."/>
            <person name="Richardson P.M."/>
            <person name="Kyrpides N.C."/>
            <person name="Ivanova N."/>
            <person name="Lindow S.E."/>
        </authorList>
    </citation>
    <scope>NUCLEOTIDE SEQUENCE [LARGE SCALE GENOMIC DNA]</scope>
    <source>
        <strain>B728a</strain>
    </source>
</reference>
<keyword id="KW-0001">2Fe-2S</keyword>
<keyword id="KW-0028">Amino-acid biosynthesis</keyword>
<keyword id="KW-0100">Branched-chain amino acid biosynthesis</keyword>
<keyword id="KW-0408">Iron</keyword>
<keyword id="KW-0411">Iron-sulfur</keyword>
<keyword id="KW-0456">Lyase</keyword>
<keyword id="KW-0460">Magnesium</keyword>
<keyword id="KW-0479">Metal-binding</keyword>
<sequence>MPDYRSKTSTHGRNMAGARALWRATGMKDEDFKKPIIAIANSFTQFVPGHVHLKDMGQLVAREVERAGGVAKEFNTIAVDDGIAMGHDGMLYSLPSREIIADSVEYMVNAHCADAIVCISNCDKITPGMLMASLRLNIPVIFVSGGPMEAGKTKLASHGLDLVDAMVIAADSTASDEKVAEYERSACPTCGSCSGMFTANSMNCLTEALGLALPGNGSALATHSDREQLFLQAGRTIVDLCRQYYKENDDSVLPRNIANFKAFENAMTLDIAMGGSTNTILHLLAAAQEAEIDFDLRHIDHLSRKVPQLCKVAPNIQKYHMEDVHRAGGIFSILGELARGGLLHTDLPTVHSKTLAEGIAKWDITQTDDEAVHTFFKAGPAGIPTQTAFSQSTRWESLDDDRENGCIRSVQHAYSQEGGLAVLYGNIALDGCVVKTAGVDESIHVFEGSAKIFESQDSAVRGILADEVKAGDIVIIRYEGPKGGPGMQEMLYPTSYLKSKGLGKDCALLTDGRFSGGTSGLSIGHASPEAAAGGAIGLVRDGDKVLIDIPNRSINLLIDDAEMAERRTEQDKKGWKPVESRPRKVTTALKAYALLATSADKGAVRDKALLDKLVP</sequence>
<organism>
    <name type="scientific">Pseudomonas syringae pv. syringae (strain B728a)</name>
    <dbReference type="NCBI Taxonomy" id="205918"/>
    <lineage>
        <taxon>Bacteria</taxon>
        <taxon>Pseudomonadati</taxon>
        <taxon>Pseudomonadota</taxon>
        <taxon>Gammaproteobacteria</taxon>
        <taxon>Pseudomonadales</taxon>
        <taxon>Pseudomonadaceae</taxon>
        <taxon>Pseudomonas</taxon>
        <taxon>Pseudomonas syringae</taxon>
    </lineage>
</organism>
<name>ILVD_PSEU2</name>
<proteinExistence type="inferred from homology"/>